<gene>
    <name evidence="1" type="primary">rpoE</name>
    <name type="ordered locus">M6_Spy1619</name>
</gene>
<organism>
    <name type="scientific">Streptococcus pyogenes serotype M6 (strain ATCC BAA-946 / MGAS10394)</name>
    <dbReference type="NCBI Taxonomy" id="286636"/>
    <lineage>
        <taxon>Bacteria</taxon>
        <taxon>Bacillati</taxon>
        <taxon>Bacillota</taxon>
        <taxon>Bacilli</taxon>
        <taxon>Lactobacillales</taxon>
        <taxon>Streptococcaceae</taxon>
        <taxon>Streptococcus</taxon>
    </lineage>
</organism>
<protein>
    <recommendedName>
        <fullName evidence="1">Probable DNA-directed RNA polymerase subunit delta</fullName>
    </recommendedName>
    <alternativeName>
        <fullName evidence="1">RNAP delta factor</fullName>
    </alternativeName>
</protein>
<proteinExistence type="evidence at protein level"/>
<name>RPOE_STRP6</name>
<keyword id="KW-0903">Direct protein sequencing</keyword>
<keyword id="KW-0240">DNA-directed RNA polymerase</keyword>
<keyword id="KW-0548">Nucleotidyltransferase</keyword>
<keyword id="KW-0804">Transcription</keyword>
<keyword id="KW-0808">Transferase</keyword>
<comment type="function">
    <text evidence="1">Participates in both the initiation and recycling phases of transcription. In the presence of the delta subunit, RNAP displays an increased specificity of transcription, a decreased affinity for nucleic acids, and an increased efficiency of RNA synthesis because of enhanced recycling.</text>
</comment>
<comment type="subunit">
    <text evidence="1">RNAP is composed of a core of 2 alpha, a beta and a beta' subunits. The core is associated with a delta subunit and one of several sigma factors.</text>
</comment>
<comment type="mass spectrometry" mass="23573.25" method="Electrospray" evidence="4"/>
<comment type="similarity">
    <text evidence="1">Belongs to the RpoE family.</text>
</comment>
<comment type="sequence caution" evidence="5">
    <conflict type="erroneous initiation">
        <sequence resource="EMBL-CDS" id="AAT87754"/>
    </conflict>
</comment>
<evidence type="ECO:0000255" key="1">
    <source>
        <dbReference type="HAMAP-Rule" id="MF_00357"/>
    </source>
</evidence>
<evidence type="ECO:0000255" key="2">
    <source>
        <dbReference type="PROSITE-ProRule" id="PRU01261"/>
    </source>
</evidence>
<evidence type="ECO:0000256" key="3">
    <source>
        <dbReference type="SAM" id="MobiDB-lite"/>
    </source>
</evidence>
<evidence type="ECO:0000269" key="4">
    <source ref="2"/>
</evidence>
<evidence type="ECO:0000305" key="5"/>
<accession>Q5XA09</accession>
<accession>P82588</accession>
<sequence length="191" mass="22233">MKLDVFAGQEKSELSMIEVARAILEERGRDNEMYFSDLVNEIQNYLGKSDAGIRHALPFFYTDLNTDGSFIPLGENKWGLRSWYAIDEIDEEIITLEEDEDGAQKRKKKRVNAFVDGDEDAIDYRDDDPEDEDFTEESAEVEYDEEDPDDEKSEVESYDSELNEIIPEDDFEEVDINEEDEEDEEDEEPVL</sequence>
<feature type="chain" id="PRO_0000204333" description="Probable DNA-directed RNA polymerase subunit delta">
    <location>
        <begin position="1"/>
        <end position="191"/>
    </location>
</feature>
<feature type="domain" description="HTH HARE-type" evidence="2">
    <location>
        <begin position="14"/>
        <end position="83"/>
    </location>
</feature>
<feature type="region of interest" description="Disordered" evidence="3">
    <location>
        <begin position="119"/>
        <end position="191"/>
    </location>
</feature>
<dbReference type="EMBL" id="CP000003">
    <property type="protein sequence ID" value="AAT87754.1"/>
    <property type="status" value="ALT_INIT"/>
    <property type="molecule type" value="Genomic_DNA"/>
</dbReference>
<dbReference type="RefSeq" id="WP_011184947.1">
    <property type="nucleotide sequence ID" value="NC_006086.1"/>
</dbReference>
<dbReference type="SMR" id="Q5XA09"/>
<dbReference type="KEGG" id="spa:M6_Spy1619"/>
<dbReference type="HOGENOM" id="CLU_116648_0_0_9"/>
<dbReference type="Proteomes" id="UP000001167">
    <property type="component" value="Chromosome"/>
</dbReference>
<dbReference type="GO" id="GO:0000428">
    <property type="term" value="C:DNA-directed RNA polymerase complex"/>
    <property type="evidence" value="ECO:0007669"/>
    <property type="project" value="UniProtKB-KW"/>
</dbReference>
<dbReference type="GO" id="GO:0003899">
    <property type="term" value="F:DNA-directed RNA polymerase activity"/>
    <property type="evidence" value="ECO:0007669"/>
    <property type="project" value="UniProtKB-UniRule"/>
</dbReference>
<dbReference type="GO" id="GO:0006351">
    <property type="term" value="P:DNA-templated transcription"/>
    <property type="evidence" value="ECO:0007669"/>
    <property type="project" value="InterPro"/>
</dbReference>
<dbReference type="GO" id="GO:0006355">
    <property type="term" value="P:regulation of DNA-templated transcription"/>
    <property type="evidence" value="ECO:0007669"/>
    <property type="project" value="UniProtKB-UniRule"/>
</dbReference>
<dbReference type="Gene3D" id="1.10.10.1250">
    <property type="entry name" value="RNA polymerase, subunit delta, N-terminal domain"/>
    <property type="match status" value="1"/>
</dbReference>
<dbReference type="HAMAP" id="MF_00357">
    <property type="entry name" value="RNApol_bact_RpoE"/>
    <property type="match status" value="1"/>
</dbReference>
<dbReference type="InterPro" id="IPR007759">
    <property type="entry name" value="Asxl_HARE-HTH"/>
</dbReference>
<dbReference type="InterPro" id="IPR038087">
    <property type="entry name" value="RNAP_delta_N_dom_sf"/>
</dbReference>
<dbReference type="InterPro" id="IPR029757">
    <property type="entry name" value="RpoE"/>
</dbReference>
<dbReference type="NCBIfam" id="TIGR04567">
    <property type="entry name" value="RNAP_delt_lowGC"/>
    <property type="match status" value="1"/>
</dbReference>
<dbReference type="Pfam" id="PF05066">
    <property type="entry name" value="HARE-HTH"/>
    <property type="match status" value="1"/>
</dbReference>
<dbReference type="PROSITE" id="PS51913">
    <property type="entry name" value="HTH_HARE"/>
    <property type="match status" value="1"/>
</dbReference>
<reference key="1">
    <citation type="journal article" date="2004" name="J. Infect. Dis.">
        <title>Progress toward characterization of the group A Streptococcus metagenome: complete genome sequence of a macrolide-resistant serotype M6 strain.</title>
        <authorList>
            <person name="Banks D.J."/>
            <person name="Porcella S.F."/>
            <person name="Barbian K.D."/>
            <person name="Beres S.B."/>
            <person name="Philips L.E."/>
            <person name="Voyich J.M."/>
            <person name="DeLeo F.R."/>
            <person name="Martin J.M."/>
            <person name="Somerville G.A."/>
            <person name="Musser J.M."/>
        </authorList>
    </citation>
    <scope>NUCLEOTIDE SEQUENCE [LARGE SCALE GENOMIC DNA]</scope>
    <source>
        <strain>ATCC BAA-946 / MGAS10394</strain>
    </source>
</reference>
<reference key="2">
    <citation type="submission" date="2000-05" db="UniProtKB">
        <title>Two-dimensional gel electrophoresis map of Streptococcus pyogenes proteins.</title>
        <authorList>
            <person name="Hogan D.A."/>
            <person name="Du P."/>
            <person name="Stevenson T.I."/>
            <person name="Whitton M."/>
            <person name="Kilby G.W."/>
            <person name="Rogers J."/>
            <person name="VanBogelen R.A."/>
        </authorList>
    </citation>
    <scope>PROTEIN SEQUENCE OF 12-21</scope>
    <scope>MASS SPECTROMETRY</scope>
    <source>
        <strain>JRS4 / Serotype M6</strain>
    </source>
</reference>